<keyword id="KW-0027">Amidation</keyword>
<keyword id="KW-0903">Direct protein sequencing</keyword>
<keyword id="KW-0527">Neuropeptide</keyword>
<keyword id="KW-0964">Secreted</keyword>
<dbReference type="GO" id="GO:0005576">
    <property type="term" value="C:extracellular region"/>
    <property type="evidence" value="ECO:0007669"/>
    <property type="project" value="UniProtKB-SubCell"/>
</dbReference>
<dbReference type="GO" id="GO:0005184">
    <property type="term" value="F:neuropeptide hormone activity"/>
    <property type="evidence" value="ECO:0007669"/>
    <property type="project" value="InterPro"/>
</dbReference>
<dbReference type="GO" id="GO:0007218">
    <property type="term" value="P:neuropeptide signaling pathway"/>
    <property type="evidence" value="ECO:0007669"/>
    <property type="project" value="UniProtKB-KW"/>
</dbReference>
<dbReference type="InterPro" id="IPR001484">
    <property type="entry name" value="Pyrokinin_CS"/>
</dbReference>
<dbReference type="PROSITE" id="PS00539">
    <property type="entry name" value="PYROKININ"/>
    <property type="match status" value="1"/>
</dbReference>
<proteinExistence type="evidence at protein level"/>
<sequence length="17" mass="1837">AGESSNEAKGMWFGPRL</sequence>
<accession>P84594</accession>
<organism>
    <name type="scientific">Blaptica dubia</name>
    <name type="common">Argentinian wood cockroach</name>
    <dbReference type="NCBI Taxonomy" id="132935"/>
    <lineage>
        <taxon>Eukaryota</taxon>
        <taxon>Metazoa</taxon>
        <taxon>Ecdysozoa</taxon>
        <taxon>Arthropoda</taxon>
        <taxon>Hexapoda</taxon>
        <taxon>Insecta</taxon>
        <taxon>Pterygota</taxon>
        <taxon>Neoptera</taxon>
        <taxon>Polyneoptera</taxon>
        <taxon>Dictyoptera</taxon>
        <taxon>Blattodea</taxon>
        <taxon>Blaberoidea</taxon>
        <taxon>Blaberidae</taxon>
        <taxon>Blaberinae</taxon>
        <taxon>Blaptica</taxon>
    </lineage>
</organism>
<evidence type="ECO:0000250" key="1">
    <source>
        <dbReference type="UniProtKB" id="P84362"/>
    </source>
</evidence>
<evidence type="ECO:0000255" key="2"/>
<evidence type="ECO:0000269" key="3">
    <source ref="1"/>
</evidence>
<evidence type="ECO:0000305" key="4"/>
<reference evidence="4" key="1">
    <citation type="submission" date="2005-05" db="UniProtKB">
        <authorList>
            <person name="Predel R."/>
        </authorList>
    </citation>
    <scope>PROTEIN SEQUENCE</scope>
    <scope>TISSUE SPECIFICITY</scope>
    <scope>MASS SPECTROMETRY</scope>
    <scope>AMIDATION AT LEU-17</scope>
    <source>
        <tissue>Abdominal perisympathetic organs</tissue>
    </source>
</reference>
<protein>
    <recommendedName>
        <fullName>Pyrokinin-5a</fullName>
    </recommendedName>
    <alternativeName>
        <fullName>FXPRL-amide</fullName>
    </alternativeName>
</protein>
<name>PPK5A_BLADU</name>
<feature type="peptide" id="PRO_0000044342" description="Pyrokinin-5a">
    <location>
        <begin position="1"/>
        <end position="17"/>
    </location>
</feature>
<feature type="modified residue" description="Leucine amide" evidence="3">
    <location>
        <position position="17"/>
    </location>
</feature>
<comment type="function">
    <text evidence="1">Myoactive.</text>
</comment>
<comment type="subcellular location">
    <subcellularLocation>
        <location evidence="4">Secreted</location>
    </subcellularLocation>
</comment>
<comment type="tissue specificity">
    <text evidence="3">Expressed in abdominal perisympathetic organs and abdominal ganglia.</text>
</comment>
<comment type="mass spectrometry" mass="1821.87" method="MALDI" evidence="3"/>
<comment type="similarity">
    <text evidence="2">Belongs to the pyrokinin family.</text>
</comment>